<gene>
    <name evidence="1" type="primary">panB</name>
    <name type="ordered locus">VC0395_A0123</name>
    <name type="ordered locus">VC395_0609</name>
</gene>
<reference key="1">
    <citation type="submission" date="2007-03" db="EMBL/GenBank/DDBJ databases">
        <authorList>
            <person name="Heidelberg J."/>
        </authorList>
    </citation>
    <scope>NUCLEOTIDE SEQUENCE [LARGE SCALE GENOMIC DNA]</scope>
    <source>
        <strain>ATCC 39541 / Classical Ogawa 395 / O395</strain>
    </source>
</reference>
<reference key="2">
    <citation type="journal article" date="2008" name="PLoS ONE">
        <title>A recalibrated molecular clock and independent origins for the cholera pandemic clones.</title>
        <authorList>
            <person name="Feng L."/>
            <person name="Reeves P.R."/>
            <person name="Lan R."/>
            <person name="Ren Y."/>
            <person name="Gao C."/>
            <person name="Zhou Z."/>
            <person name="Ren Y."/>
            <person name="Cheng J."/>
            <person name="Wang W."/>
            <person name="Wang J."/>
            <person name="Qian W."/>
            <person name="Li D."/>
            <person name="Wang L."/>
        </authorList>
    </citation>
    <scope>NUCLEOTIDE SEQUENCE [LARGE SCALE GENOMIC DNA]</scope>
    <source>
        <strain>ATCC 39541 / Classical Ogawa 395 / O395</strain>
    </source>
</reference>
<comment type="function">
    <text evidence="1">Catalyzes the reversible reaction in which hydroxymethyl group from 5,10-methylenetetrahydrofolate is transferred onto alpha-ketoisovalerate to form ketopantoate.</text>
</comment>
<comment type="catalytic activity">
    <reaction evidence="1">
        <text>3-methyl-2-oxobutanoate + (6R)-5,10-methylene-5,6,7,8-tetrahydrofolate + H2O = 2-dehydropantoate + (6S)-5,6,7,8-tetrahydrofolate</text>
        <dbReference type="Rhea" id="RHEA:11824"/>
        <dbReference type="ChEBI" id="CHEBI:11561"/>
        <dbReference type="ChEBI" id="CHEBI:11851"/>
        <dbReference type="ChEBI" id="CHEBI:15377"/>
        <dbReference type="ChEBI" id="CHEBI:15636"/>
        <dbReference type="ChEBI" id="CHEBI:57453"/>
        <dbReference type="EC" id="2.1.2.11"/>
    </reaction>
</comment>
<comment type="cofactor">
    <cofactor evidence="1">
        <name>Mg(2+)</name>
        <dbReference type="ChEBI" id="CHEBI:18420"/>
    </cofactor>
    <text evidence="1">Binds 1 Mg(2+) ion per subunit.</text>
</comment>
<comment type="pathway">
    <text evidence="1">Cofactor biosynthesis; (R)-pantothenate biosynthesis; (R)-pantoate from 3-methyl-2-oxobutanoate: step 1/2.</text>
</comment>
<comment type="subunit">
    <text evidence="1">Homodecamer; pentamer of dimers.</text>
</comment>
<comment type="subcellular location">
    <subcellularLocation>
        <location evidence="1">Cytoplasm</location>
    </subcellularLocation>
</comment>
<comment type="similarity">
    <text evidence="1">Belongs to the PanB family.</text>
</comment>
<evidence type="ECO:0000255" key="1">
    <source>
        <dbReference type="HAMAP-Rule" id="MF_00156"/>
    </source>
</evidence>
<proteinExistence type="inferred from homology"/>
<organism>
    <name type="scientific">Vibrio cholerae serotype O1 (strain ATCC 39541 / Classical Ogawa 395 / O395)</name>
    <dbReference type="NCBI Taxonomy" id="345073"/>
    <lineage>
        <taxon>Bacteria</taxon>
        <taxon>Pseudomonadati</taxon>
        <taxon>Pseudomonadota</taxon>
        <taxon>Gammaproteobacteria</taxon>
        <taxon>Vibrionales</taxon>
        <taxon>Vibrionaceae</taxon>
        <taxon>Vibrio</taxon>
    </lineage>
</organism>
<name>PANB_VIBC3</name>
<keyword id="KW-0963">Cytoplasm</keyword>
<keyword id="KW-0460">Magnesium</keyword>
<keyword id="KW-0479">Metal-binding</keyword>
<keyword id="KW-0566">Pantothenate biosynthesis</keyword>
<keyword id="KW-0808">Transferase</keyword>
<protein>
    <recommendedName>
        <fullName evidence="1">3-methyl-2-oxobutanoate hydroxymethyltransferase</fullName>
        <ecNumber evidence="1">2.1.2.11</ecNumber>
    </recommendedName>
    <alternativeName>
        <fullName evidence="1">Ketopantoate hydroxymethyltransferase</fullName>
        <shortName evidence="1">KPHMT</shortName>
    </alternativeName>
</protein>
<sequence>MKKITINDLMKWKQEGRKFATSTAYDASFAQLFESQEMPVLLVGDSLGMVLQGETDTLPVTVDDIAYHTRCVRKGSPNCLLMADMPFMSYATPEQACENAAKLVRAGANMVKIEGGDWLVDTVKMLTERAVPVCAHLGLTPQSVNIFGGYKVQGREQDKADRMVRDALALQEAGAQIVLLECVPAELANRITQILDVPVIGIGAGNGTDGQILVMHDMFGISANYMPKFSKNFLAETGDIRQAVAKYIEDVASGAFPDLAHTIA</sequence>
<accession>A5F975</accession>
<accession>C3LXB8</accession>
<feature type="chain" id="PRO_1000071534" description="3-methyl-2-oxobutanoate hydroxymethyltransferase">
    <location>
        <begin position="1"/>
        <end position="264"/>
    </location>
</feature>
<feature type="active site" description="Proton acceptor" evidence="1">
    <location>
        <position position="181"/>
    </location>
</feature>
<feature type="binding site" evidence="1">
    <location>
        <begin position="45"/>
        <end position="46"/>
    </location>
    <ligand>
        <name>3-methyl-2-oxobutanoate</name>
        <dbReference type="ChEBI" id="CHEBI:11851"/>
    </ligand>
</feature>
<feature type="binding site" evidence="1">
    <location>
        <position position="45"/>
    </location>
    <ligand>
        <name>Mg(2+)</name>
        <dbReference type="ChEBI" id="CHEBI:18420"/>
    </ligand>
</feature>
<feature type="binding site" evidence="1">
    <location>
        <position position="84"/>
    </location>
    <ligand>
        <name>3-methyl-2-oxobutanoate</name>
        <dbReference type="ChEBI" id="CHEBI:11851"/>
    </ligand>
</feature>
<feature type="binding site" evidence="1">
    <location>
        <position position="84"/>
    </location>
    <ligand>
        <name>Mg(2+)</name>
        <dbReference type="ChEBI" id="CHEBI:18420"/>
    </ligand>
</feature>
<feature type="binding site" evidence="1">
    <location>
        <position position="112"/>
    </location>
    <ligand>
        <name>3-methyl-2-oxobutanoate</name>
        <dbReference type="ChEBI" id="CHEBI:11851"/>
    </ligand>
</feature>
<feature type="binding site" evidence="1">
    <location>
        <position position="114"/>
    </location>
    <ligand>
        <name>Mg(2+)</name>
        <dbReference type="ChEBI" id="CHEBI:18420"/>
    </ligand>
</feature>
<dbReference type="EC" id="2.1.2.11" evidence="1"/>
<dbReference type="EMBL" id="CP000627">
    <property type="protein sequence ID" value="ABQ20384.1"/>
    <property type="molecule type" value="Genomic_DNA"/>
</dbReference>
<dbReference type="EMBL" id="CP001235">
    <property type="protein sequence ID" value="ACP08628.1"/>
    <property type="molecule type" value="Genomic_DNA"/>
</dbReference>
<dbReference type="RefSeq" id="WP_000724415.1">
    <property type="nucleotide sequence ID" value="NZ_JAACZH010000006.1"/>
</dbReference>
<dbReference type="SMR" id="A5F975"/>
<dbReference type="KEGG" id="vco:VC0395_A0123"/>
<dbReference type="KEGG" id="vcr:VC395_0609"/>
<dbReference type="PATRIC" id="fig|345073.21.peg.593"/>
<dbReference type="eggNOG" id="COG0413">
    <property type="taxonomic scope" value="Bacteria"/>
</dbReference>
<dbReference type="HOGENOM" id="CLU_036645_1_0_6"/>
<dbReference type="OrthoDB" id="9781789at2"/>
<dbReference type="UniPathway" id="UPA00028">
    <property type="reaction ID" value="UER00003"/>
</dbReference>
<dbReference type="Proteomes" id="UP000000249">
    <property type="component" value="Chromosome 2"/>
</dbReference>
<dbReference type="GO" id="GO:0005737">
    <property type="term" value="C:cytoplasm"/>
    <property type="evidence" value="ECO:0007669"/>
    <property type="project" value="UniProtKB-SubCell"/>
</dbReference>
<dbReference type="GO" id="GO:0003864">
    <property type="term" value="F:3-methyl-2-oxobutanoate hydroxymethyltransferase activity"/>
    <property type="evidence" value="ECO:0007669"/>
    <property type="project" value="UniProtKB-UniRule"/>
</dbReference>
<dbReference type="GO" id="GO:0000287">
    <property type="term" value="F:magnesium ion binding"/>
    <property type="evidence" value="ECO:0007669"/>
    <property type="project" value="TreeGrafter"/>
</dbReference>
<dbReference type="GO" id="GO:0015940">
    <property type="term" value="P:pantothenate biosynthetic process"/>
    <property type="evidence" value="ECO:0007669"/>
    <property type="project" value="UniProtKB-UniRule"/>
</dbReference>
<dbReference type="CDD" id="cd06557">
    <property type="entry name" value="KPHMT-like"/>
    <property type="match status" value="1"/>
</dbReference>
<dbReference type="FunFam" id="3.20.20.60:FF:000003">
    <property type="entry name" value="3-methyl-2-oxobutanoate hydroxymethyltransferase"/>
    <property type="match status" value="1"/>
</dbReference>
<dbReference type="Gene3D" id="3.20.20.60">
    <property type="entry name" value="Phosphoenolpyruvate-binding domains"/>
    <property type="match status" value="1"/>
</dbReference>
<dbReference type="HAMAP" id="MF_00156">
    <property type="entry name" value="PanB"/>
    <property type="match status" value="1"/>
</dbReference>
<dbReference type="InterPro" id="IPR003700">
    <property type="entry name" value="Pantoate_hydroxy_MeTrfase"/>
</dbReference>
<dbReference type="InterPro" id="IPR015813">
    <property type="entry name" value="Pyrv/PenolPyrv_kinase-like_dom"/>
</dbReference>
<dbReference type="InterPro" id="IPR040442">
    <property type="entry name" value="Pyrv_kinase-like_dom_sf"/>
</dbReference>
<dbReference type="NCBIfam" id="TIGR00222">
    <property type="entry name" value="panB"/>
    <property type="match status" value="1"/>
</dbReference>
<dbReference type="NCBIfam" id="NF001452">
    <property type="entry name" value="PRK00311.1"/>
    <property type="match status" value="1"/>
</dbReference>
<dbReference type="PANTHER" id="PTHR20881">
    <property type="entry name" value="3-METHYL-2-OXOBUTANOATE HYDROXYMETHYLTRANSFERASE"/>
    <property type="match status" value="1"/>
</dbReference>
<dbReference type="PANTHER" id="PTHR20881:SF0">
    <property type="entry name" value="3-METHYL-2-OXOBUTANOATE HYDROXYMETHYLTRANSFERASE"/>
    <property type="match status" value="1"/>
</dbReference>
<dbReference type="Pfam" id="PF02548">
    <property type="entry name" value="Pantoate_transf"/>
    <property type="match status" value="1"/>
</dbReference>
<dbReference type="PIRSF" id="PIRSF000388">
    <property type="entry name" value="Pantoate_hydroxy_MeTrfase"/>
    <property type="match status" value="1"/>
</dbReference>
<dbReference type="SUPFAM" id="SSF51621">
    <property type="entry name" value="Phosphoenolpyruvate/pyruvate domain"/>
    <property type="match status" value="1"/>
</dbReference>